<evidence type="ECO:0000255" key="1">
    <source>
        <dbReference type="HAMAP-Rule" id="MF_00221"/>
    </source>
</evidence>
<evidence type="ECO:0000256" key="2">
    <source>
        <dbReference type="SAM" id="MobiDB-lite"/>
    </source>
</evidence>
<keyword id="KW-1003">Cell membrane</keyword>
<keyword id="KW-0406">Ion transport</keyword>
<keyword id="KW-0472">Membrane</keyword>
<keyword id="KW-0769">Symport</keyword>
<keyword id="KW-0812">Transmembrane</keyword>
<keyword id="KW-1133">Transmembrane helix</keyword>
<keyword id="KW-0813">Transport</keyword>
<accession>B8DE85</accession>
<proteinExistence type="inferred from homology"/>
<dbReference type="EMBL" id="CP001175">
    <property type="protein sequence ID" value="ACK39492.1"/>
    <property type="molecule type" value="Genomic_DNA"/>
</dbReference>
<dbReference type="RefSeq" id="WP_003721929.1">
    <property type="nucleotide sequence ID" value="NC_011660.1"/>
</dbReference>
<dbReference type="SMR" id="B8DE85"/>
<dbReference type="KEGG" id="lmh:LMHCC_1144"/>
<dbReference type="HOGENOM" id="CLU_020088_2_0_9"/>
<dbReference type="GO" id="GO:0005886">
    <property type="term" value="C:plasma membrane"/>
    <property type="evidence" value="ECO:0007669"/>
    <property type="project" value="UniProtKB-SubCell"/>
</dbReference>
<dbReference type="GO" id="GO:0015086">
    <property type="term" value="F:cadmium ion transmembrane transporter activity"/>
    <property type="evidence" value="ECO:0007669"/>
    <property type="project" value="TreeGrafter"/>
</dbReference>
<dbReference type="GO" id="GO:0005384">
    <property type="term" value="F:manganese ion transmembrane transporter activity"/>
    <property type="evidence" value="ECO:0007669"/>
    <property type="project" value="TreeGrafter"/>
</dbReference>
<dbReference type="GO" id="GO:0046872">
    <property type="term" value="F:metal ion binding"/>
    <property type="evidence" value="ECO:0007669"/>
    <property type="project" value="UniProtKB-UniRule"/>
</dbReference>
<dbReference type="GO" id="GO:0015293">
    <property type="term" value="F:symporter activity"/>
    <property type="evidence" value="ECO:0007669"/>
    <property type="project" value="UniProtKB-UniRule"/>
</dbReference>
<dbReference type="GO" id="GO:0034755">
    <property type="term" value="P:iron ion transmembrane transport"/>
    <property type="evidence" value="ECO:0007669"/>
    <property type="project" value="TreeGrafter"/>
</dbReference>
<dbReference type="HAMAP" id="MF_00221">
    <property type="entry name" value="NRAMP"/>
    <property type="match status" value="1"/>
</dbReference>
<dbReference type="InterPro" id="IPR001046">
    <property type="entry name" value="NRAMP_fam"/>
</dbReference>
<dbReference type="NCBIfam" id="TIGR01197">
    <property type="entry name" value="nramp"/>
    <property type="match status" value="1"/>
</dbReference>
<dbReference type="NCBIfam" id="NF037982">
    <property type="entry name" value="Nramp_1"/>
    <property type="match status" value="1"/>
</dbReference>
<dbReference type="NCBIfam" id="NF001923">
    <property type="entry name" value="PRK00701.1"/>
    <property type="match status" value="1"/>
</dbReference>
<dbReference type="PANTHER" id="PTHR11706:SF33">
    <property type="entry name" value="NATURAL RESISTANCE-ASSOCIATED MACROPHAGE PROTEIN 2"/>
    <property type="match status" value="1"/>
</dbReference>
<dbReference type="PANTHER" id="PTHR11706">
    <property type="entry name" value="SOLUTE CARRIER PROTEIN FAMILY 11 MEMBER"/>
    <property type="match status" value="1"/>
</dbReference>
<dbReference type="Pfam" id="PF01566">
    <property type="entry name" value="Nramp"/>
    <property type="match status" value="1"/>
</dbReference>
<dbReference type="PRINTS" id="PR00447">
    <property type="entry name" value="NATRESASSCMP"/>
</dbReference>
<reference key="1">
    <citation type="journal article" date="2011" name="J. Bacteriol.">
        <title>Genome sequence of lineage III Listeria monocytogenes strain HCC23.</title>
        <authorList>
            <person name="Steele C.L."/>
            <person name="Donaldson J.R."/>
            <person name="Paul D."/>
            <person name="Banes M.M."/>
            <person name="Arick T."/>
            <person name="Bridges S.M."/>
            <person name="Lawrence M.L."/>
        </authorList>
    </citation>
    <scope>NUCLEOTIDE SEQUENCE [LARGE SCALE GENOMIC DNA]</scope>
    <source>
        <strain>HCC23</strain>
    </source>
</reference>
<comment type="function">
    <text evidence="1">H(+)-stimulated, divalent metal cation uptake system.</text>
</comment>
<comment type="subcellular location">
    <subcellularLocation>
        <location evidence="1">Cell membrane</location>
        <topology evidence="1">Multi-pass membrane protein</topology>
    </subcellularLocation>
</comment>
<comment type="similarity">
    <text evidence="1">Belongs to the NRAMP family.</text>
</comment>
<name>MNTH_LISMH</name>
<gene>
    <name evidence="1" type="primary">mntH</name>
    <name type="ordered locus">LMHCC_1144</name>
</gene>
<feature type="chain" id="PRO_1000124866" description="Divalent metal cation transporter MntH">
    <location>
        <begin position="1"/>
        <end position="448"/>
    </location>
</feature>
<feature type="transmembrane region" description="Helical" evidence="1">
    <location>
        <begin position="41"/>
        <end position="61"/>
    </location>
</feature>
<feature type="transmembrane region" description="Helical" evidence="1">
    <location>
        <begin position="69"/>
        <end position="89"/>
    </location>
</feature>
<feature type="transmembrane region" description="Helical" evidence="1">
    <location>
        <begin position="117"/>
        <end position="137"/>
    </location>
</feature>
<feature type="transmembrane region" description="Helical" evidence="1">
    <location>
        <begin position="147"/>
        <end position="167"/>
    </location>
</feature>
<feature type="transmembrane region" description="Helical" evidence="1">
    <location>
        <begin position="176"/>
        <end position="196"/>
    </location>
</feature>
<feature type="transmembrane region" description="Helical" evidence="1">
    <location>
        <begin position="215"/>
        <end position="235"/>
    </location>
</feature>
<feature type="transmembrane region" description="Helical" evidence="1">
    <location>
        <begin position="270"/>
        <end position="290"/>
    </location>
</feature>
<feature type="transmembrane region" description="Helical" evidence="1">
    <location>
        <begin position="307"/>
        <end position="327"/>
    </location>
</feature>
<feature type="transmembrane region" description="Helical" evidence="1">
    <location>
        <begin position="363"/>
        <end position="383"/>
    </location>
</feature>
<feature type="transmembrane region" description="Helical" evidence="1">
    <location>
        <begin position="384"/>
        <end position="404"/>
    </location>
</feature>
<feature type="transmembrane region" description="Helical" evidence="1">
    <location>
        <begin position="424"/>
        <end position="444"/>
    </location>
</feature>
<feature type="region of interest" description="Disordered" evidence="2">
    <location>
        <begin position="1"/>
        <end position="20"/>
    </location>
</feature>
<feature type="compositionally biased region" description="Basic and acidic residues" evidence="2">
    <location>
        <begin position="1"/>
        <end position="10"/>
    </location>
</feature>
<organism>
    <name type="scientific">Listeria monocytogenes serotype 4a (strain HCC23)</name>
    <dbReference type="NCBI Taxonomy" id="552536"/>
    <lineage>
        <taxon>Bacteria</taxon>
        <taxon>Bacillati</taxon>
        <taxon>Bacillota</taxon>
        <taxon>Bacilli</taxon>
        <taxon>Bacillales</taxon>
        <taxon>Listeriaceae</taxon>
        <taxon>Listeria</taxon>
    </lineage>
</organism>
<sequence length="448" mass="48623">MKKDKTERTKQSWRKAQNAPSLSEVNNSVAIPKNAKFFRKLFAFMGPGALIAVGYVDPGNWATSIAGGSEFGYTLLSVILISNILAVLLQSLASKLGIVTGRDLAQASSDHFSKPFGFVLWILAELAIIATDIAEVIGSAIALNLLFGIPLIWGVCITALDIFLVLFLQHKGFRYIEVIVITLMVTILVCFGAEMVMSHPDMQAIAKGFIPQSEIVTNPAMLYIALGILGATVMPHNLYLHSSIVQTRQYARTKEGKKEAIRFSFIDSTFSLTIALLINASILILAAAAFYTTGQHNVAGIEDAYKLLNPTLGSSIASTVFAVALLASGQNSTLTGTLAGQIVMEGFLNIRLKPVVRRLLTRVLAIVPAVIITALYGANGINELLIFSQVILSMQLSFAVIPLVMFTSDKQKMGEFVNPTWLKIISWAVAIFIAVLNIYLLFYTLTSL</sequence>
<protein>
    <recommendedName>
        <fullName evidence="1">Divalent metal cation transporter MntH</fullName>
    </recommendedName>
</protein>